<reference key="1">
    <citation type="journal article" date="2005" name="PLoS Biol.">
        <title>The genome sequence of Rickettsia felis identifies the first putative conjugative plasmid in an obligate intracellular parasite.</title>
        <authorList>
            <person name="Ogata H."/>
            <person name="Renesto P."/>
            <person name="Audic S."/>
            <person name="Robert C."/>
            <person name="Blanc G."/>
            <person name="Fournier P.-E."/>
            <person name="Parinello H."/>
            <person name="Claverie J.-M."/>
            <person name="Raoult D."/>
        </authorList>
    </citation>
    <scope>NUCLEOTIDE SEQUENCE [LARGE SCALE GENOMIC DNA]</scope>
    <source>
        <strain>ATCC VR-1525 / URRWXCal2</strain>
    </source>
</reference>
<accession>Q4UMT9</accession>
<evidence type="ECO:0000305" key="1"/>
<dbReference type="EMBL" id="CP000053">
    <property type="protein sequence ID" value="AAY61119.1"/>
    <property type="molecule type" value="Genomic_DNA"/>
</dbReference>
<dbReference type="SMR" id="Q4UMT9"/>
<dbReference type="STRING" id="315456.RF_0268"/>
<dbReference type="MEROPS" id="I11.001"/>
<dbReference type="KEGG" id="rfe:RF_0268"/>
<dbReference type="eggNOG" id="COG4574">
    <property type="taxonomic scope" value="Bacteria"/>
</dbReference>
<dbReference type="HOGENOM" id="CLU_111565_0_0_5"/>
<dbReference type="OrthoDB" id="997196at2"/>
<dbReference type="Proteomes" id="UP000008548">
    <property type="component" value="Chromosome"/>
</dbReference>
<dbReference type="GO" id="GO:0004867">
    <property type="term" value="F:serine-type endopeptidase inhibitor activity"/>
    <property type="evidence" value="ECO:0007669"/>
    <property type="project" value="InterPro"/>
</dbReference>
<dbReference type="Gene3D" id="2.60.40.550">
    <property type="entry name" value="Ecotin"/>
    <property type="match status" value="1"/>
</dbReference>
<dbReference type="InterPro" id="IPR036198">
    <property type="entry name" value="Ecotin_sf"/>
</dbReference>
<dbReference type="InterPro" id="IPR005658">
    <property type="entry name" value="Prot_inh_ecotin"/>
</dbReference>
<dbReference type="NCBIfam" id="NF002987">
    <property type="entry name" value="PRK03719.1"/>
    <property type="match status" value="1"/>
</dbReference>
<dbReference type="PANTHER" id="PTHR35890">
    <property type="match status" value="1"/>
</dbReference>
<dbReference type="PANTHER" id="PTHR35890:SF3">
    <property type="entry name" value="ECOTIN"/>
    <property type="match status" value="1"/>
</dbReference>
<dbReference type="Pfam" id="PF03974">
    <property type="entry name" value="Ecotin"/>
    <property type="match status" value="1"/>
</dbReference>
<dbReference type="PIRSF" id="PIRSF006865">
    <property type="entry name" value="Prot_inh_ecotin"/>
    <property type="match status" value="1"/>
</dbReference>
<dbReference type="SUPFAM" id="SSF49772">
    <property type="entry name" value="Ecotin, trypsin inhibitor"/>
    <property type="match status" value="1"/>
</dbReference>
<name>ECOTL_RICFE</name>
<organism>
    <name type="scientific">Rickettsia felis (strain ATCC VR-1525 / URRWXCal2)</name>
    <name type="common">Rickettsia azadi</name>
    <dbReference type="NCBI Taxonomy" id="315456"/>
    <lineage>
        <taxon>Bacteria</taxon>
        <taxon>Pseudomonadati</taxon>
        <taxon>Pseudomonadota</taxon>
        <taxon>Alphaproteobacteria</taxon>
        <taxon>Rickettsiales</taxon>
        <taxon>Rickettsiaceae</taxon>
        <taxon>Rickettsieae</taxon>
        <taxon>Rickettsia</taxon>
        <taxon>spotted fever group</taxon>
    </lineage>
</organism>
<proteinExistence type="inferred from homology"/>
<comment type="similarity">
    <text evidence="1">Belongs to the protease inhibitor I11 (ecotin) family.</text>
</comment>
<feature type="chain" id="PRO_0000291608" description="Ecotin-like protein">
    <location>
        <begin position="1"/>
        <end position="162"/>
    </location>
</feature>
<sequence length="162" mass="18500">MQNKIILLLTLCFLNTYLLANSDKTLKDIAPYPLPTDSQKRYVIHLPTESNEEKLKVELQATKNAMKDCNRVWFGGKLETKTLEGWGYNYYIIDQVSDQPASTMMACPGIKATIKPVSVFLGDETFLRYNSKLPIVVYAPKEVELHYVIWHQNDIINSAKEG</sequence>
<protein>
    <recommendedName>
        <fullName>Ecotin-like protein</fullName>
    </recommendedName>
</protein>
<gene>
    <name type="ordered locus">RF_0268</name>
</gene>